<evidence type="ECO:0000255" key="1">
    <source>
        <dbReference type="HAMAP-Rule" id="MF_00440"/>
    </source>
</evidence>
<feature type="chain" id="PRO_0000264212" description="Transcriptional repressor NrdR">
    <location>
        <begin position="1"/>
        <end position="155"/>
    </location>
</feature>
<feature type="domain" description="ATP-cone" evidence="1">
    <location>
        <begin position="49"/>
        <end position="139"/>
    </location>
</feature>
<feature type="zinc finger region" evidence="1">
    <location>
        <begin position="3"/>
        <end position="34"/>
    </location>
</feature>
<gene>
    <name evidence="1" type="primary">nrdR</name>
    <name type="ordered locus">TM1040_2136</name>
</gene>
<reference key="1">
    <citation type="submission" date="2006-05" db="EMBL/GenBank/DDBJ databases">
        <title>Complete sequence of chromosome of Silicibacter sp. TM1040.</title>
        <authorList>
            <consortium name="US DOE Joint Genome Institute"/>
            <person name="Copeland A."/>
            <person name="Lucas S."/>
            <person name="Lapidus A."/>
            <person name="Barry K."/>
            <person name="Detter J.C."/>
            <person name="Glavina del Rio T."/>
            <person name="Hammon N."/>
            <person name="Israni S."/>
            <person name="Dalin E."/>
            <person name="Tice H."/>
            <person name="Pitluck S."/>
            <person name="Brettin T."/>
            <person name="Bruce D."/>
            <person name="Han C."/>
            <person name="Tapia R."/>
            <person name="Goodwin L."/>
            <person name="Thompson L.S."/>
            <person name="Gilna P."/>
            <person name="Schmutz J."/>
            <person name="Larimer F."/>
            <person name="Land M."/>
            <person name="Hauser L."/>
            <person name="Kyrpides N."/>
            <person name="Kim E."/>
            <person name="Belas R."/>
            <person name="Moran M.A."/>
            <person name="Buchan A."/>
            <person name="Gonzalez J.M."/>
            <person name="Schell M.A."/>
            <person name="Sun F."/>
            <person name="Richardson P."/>
        </authorList>
    </citation>
    <scope>NUCLEOTIDE SEQUENCE [LARGE SCALE GENOMIC DNA]</scope>
    <source>
        <strain>TM1040</strain>
    </source>
</reference>
<name>NRDR_RUEST</name>
<organism>
    <name type="scientific">Ruegeria sp. (strain TM1040)</name>
    <name type="common">Silicibacter sp.</name>
    <dbReference type="NCBI Taxonomy" id="292414"/>
    <lineage>
        <taxon>Bacteria</taxon>
        <taxon>Pseudomonadati</taxon>
        <taxon>Pseudomonadota</taxon>
        <taxon>Alphaproteobacteria</taxon>
        <taxon>Rhodobacterales</taxon>
        <taxon>Roseobacteraceae</taxon>
        <taxon>Ruegeria</taxon>
    </lineage>
</organism>
<dbReference type="EMBL" id="CP000377">
    <property type="protein sequence ID" value="ABF64868.1"/>
    <property type="molecule type" value="Genomic_DNA"/>
</dbReference>
<dbReference type="RefSeq" id="WP_011539460.1">
    <property type="nucleotide sequence ID" value="NC_008044.1"/>
</dbReference>
<dbReference type="SMR" id="Q1GEP8"/>
<dbReference type="STRING" id="292414.TM1040_2136"/>
<dbReference type="KEGG" id="sit:TM1040_2136"/>
<dbReference type="eggNOG" id="COG1327">
    <property type="taxonomic scope" value="Bacteria"/>
</dbReference>
<dbReference type="HOGENOM" id="CLU_108412_0_1_5"/>
<dbReference type="OrthoDB" id="9807461at2"/>
<dbReference type="Proteomes" id="UP000000636">
    <property type="component" value="Chromosome"/>
</dbReference>
<dbReference type="GO" id="GO:0005524">
    <property type="term" value="F:ATP binding"/>
    <property type="evidence" value="ECO:0007669"/>
    <property type="project" value="UniProtKB-KW"/>
</dbReference>
<dbReference type="GO" id="GO:0003677">
    <property type="term" value="F:DNA binding"/>
    <property type="evidence" value="ECO:0007669"/>
    <property type="project" value="UniProtKB-KW"/>
</dbReference>
<dbReference type="GO" id="GO:0008270">
    <property type="term" value="F:zinc ion binding"/>
    <property type="evidence" value="ECO:0007669"/>
    <property type="project" value="UniProtKB-UniRule"/>
</dbReference>
<dbReference type="GO" id="GO:0045892">
    <property type="term" value="P:negative regulation of DNA-templated transcription"/>
    <property type="evidence" value="ECO:0007669"/>
    <property type="project" value="UniProtKB-UniRule"/>
</dbReference>
<dbReference type="HAMAP" id="MF_00440">
    <property type="entry name" value="NrdR"/>
    <property type="match status" value="1"/>
</dbReference>
<dbReference type="InterPro" id="IPR005144">
    <property type="entry name" value="ATP-cone_dom"/>
</dbReference>
<dbReference type="InterPro" id="IPR055173">
    <property type="entry name" value="NrdR-like_N"/>
</dbReference>
<dbReference type="InterPro" id="IPR003796">
    <property type="entry name" value="RNR_NrdR-like"/>
</dbReference>
<dbReference type="NCBIfam" id="TIGR00244">
    <property type="entry name" value="transcriptional regulator NrdR"/>
    <property type="match status" value="1"/>
</dbReference>
<dbReference type="PANTHER" id="PTHR30455">
    <property type="entry name" value="TRANSCRIPTIONAL REPRESSOR NRDR"/>
    <property type="match status" value="1"/>
</dbReference>
<dbReference type="PANTHER" id="PTHR30455:SF2">
    <property type="entry name" value="TRANSCRIPTIONAL REPRESSOR NRDR"/>
    <property type="match status" value="1"/>
</dbReference>
<dbReference type="Pfam" id="PF03477">
    <property type="entry name" value="ATP-cone"/>
    <property type="match status" value="1"/>
</dbReference>
<dbReference type="Pfam" id="PF22811">
    <property type="entry name" value="Zn_ribbon_NrdR"/>
    <property type="match status" value="1"/>
</dbReference>
<dbReference type="PROSITE" id="PS51161">
    <property type="entry name" value="ATP_CONE"/>
    <property type="match status" value="1"/>
</dbReference>
<proteinExistence type="inferred from homology"/>
<accession>Q1GEP8</accession>
<comment type="function">
    <text evidence="1">Negatively regulates transcription of bacterial ribonucleotide reductase nrd genes and operons by binding to NrdR-boxes.</text>
</comment>
<comment type="cofactor">
    <cofactor evidence="1">
        <name>Zn(2+)</name>
        <dbReference type="ChEBI" id="CHEBI:29105"/>
    </cofactor>
    <text evidence="1">Binds 1 zinc ion.</text>
</comment>
<comment type="similarity">
    <text evidence="1">Belongs to the NrdR family.</text>
</comment>
<protein>
    <recommendedName>
        <fullName evidence="1">Transcriptional repressor NrdR</fullName>
    </recommendedName>
</protein>
<sequence>MRCPFCGNVDTQVKDSRPAEDHVSIRRRRFCPACGGRFTTYERVQLRDLVVIKTNGKREDFDRDKLERSIRISMQKRPVDPERIDQMISGIVRRLESMGETDIPSKKIGEIVMEALARIDTVAYVRFASVYKNFQAADDFEDFVHELRPPAPPES</sequence>
<keyword id="KW-0067">ATP-binding</keyword>
<keyword id="KW-0238">DNA-binding</keyword>
<keyword id="KW-0479">Metal-binding</keyword>
<keyword id="KW-0547">Nucleotide-binding</keyword>
<keyword id="KW-1185">Reference proteome</keyword>
<keyword id="KW-0678">Repressor</keyword>
<keyword id="KW-0804">Transcription</keyword>
<keyword id="KW-0805">Transcription regulation</keyword>
<keyword id="KW-0862">Zinc</keyword>
<keyword id="KW-0863">Zinc-finger</keyword>